<reference key="1">
    <citation type="submission" date="2003-03" db="EMBL/GenBank/DDBJ databases">
        <title>The complete genome sequence of Neisseria gonorrhoeae.</title>
        <authorList>
            <person name="Lewis L.A."/>
            <person name="Gillaspy A.F."/>
            <person name="McLaughlin R.E."/>
            <person name="Gipson M."/>
            <person name="Ducey T.F."/>
            <person name="Ownbey T."/>
            <person name="Hartman K."/>
            <person name="Nydick C."/>
            <person name="Carson M.B."/>
            <person name="Vaughn J."/>
            <person name="Thomson C."/>
            <person name="Song L."/>
            <person name="Lin S."/>
            <person name="Yuan X."/>
            <person name="Najar F."/>
            <person name="Zhan M."/>
            <person name="Ren Q."/>
            <person name="Zhu H."/>
            <person name="Qi S."/>
            <person name="Kenton S.M."/>
            <person name="Lai H."/>
            <person name="White J.D."/>
            <person name="Clifton S."/>
            <person name="Roe B.A."/>
            <person name="Dyer D.W."/>
        </authorList>
    </citation>
    <scope>NUCLEOTIDE SEQUENCE [LARGE SCALE GENOMIC DNA]</scope>
    <source>
        <strain>ATCC 700825 / FA 1090</strain>
    </source>
</reference>
<keyword id="KW-0963">Cytoplasm</keyword>
<keyword id="KW-0342">GTP-binding</keyword>
<keyword id="KW-0396">Initiation factor</keyword>
<keyword id="KW-0547">Nucleotide-binding</keyword>
<keyword id="KW-0648">Protein biosynthesis</keyword>
<keyword id="KW-1185">Reference proteome</keyword>
<sequence>MSNTTVEQFAAELKRPVEDLLKQLKEAGVSKNSGSDSLTLDDKQLLNAYLTKKNGSNGGTISIRRTKTEVSTVDGVKVETRKRGRTVNIPSAEELAAQVKAAQTQAAPVQPEQTAEDAVKARAEAAARAEARAKAEAEAAKLKAAKAGNKAKPAAQKPTEAKAETAPVAAETKPAEPKEKAVKPKHERNGKGKDAKKPAKPAAPAVPQPVVSAEEQAQRDEEARRAAALRAHQEALLKEKQERQARREAMKQQAEQQAKAAQEAKTGRQRPAKPAEKPQAAAPAVENKPVNPAKAKKEDRRNRDDEGQGRNAKGKGAKGGRDRNNARNGGDERVRGGKKGKKLKLEPNQHAFQAPTEPVVHEVLVPETITVADLAHKMAVKGVEMVKALMKKGMMVTINQSIDQDTALIVVKKLGHIGKPAAADDPEAFLGEGAEAEEAEALPRPPVVTVMGHVDHGKTSLLDYIRRAKVVQGEAGGITQHIGAYHVKTPRGVITFLDTPGHEAFTAMRARGAKATDIVILVVAADDGVMPQTIEAIAHAKAAGVPIVVAVNKIDKDTANPERIRQELTQHEVIPDDWGGTVQFIDVSAKKGTNIDALLEAVLLEAEVLELTAPVDAPAKGIIVEARLDKGRGAVATLLVQNGTLKKGDMLLAGTAFGKIRAMVDENGKSITEAGPSIPVEILGLSDVPNAGEDAMVLADEKKAREIALFRQGKYRDVRLAKQQAAKLENMFNNMGETQAQSLSVIIKADVQGSYEALAGSLKKLSADEVKVNVLHSGVGGITESDVNLAIASGAFIIGFNVRADASSRKLAENENVEIRYYNIIYDAIDDVKAAMSGMLSPEKKEQVTGTVEIRQVISVSKVGNIAGCMVTDGVVKRDSHIRLIRNNVVIHTGELASLKRYKDDVKEVRMGFECGLMLKGYNEIMEGDQLECFDIVEVARTL</sequence>
<dbReference type="EMBL" id="AE004969">
    <property type="protein sequence ID" value="AAW89940.1"/>
    <property type="molecule type" value="Genomic_DNA"/>
</dbReference>
<dbReference type="RefSeq" id="WP_010951232.1">
    <property type="nucleotide sequence ID" value="NC_002946.2"/>
</dbReference>
<dbReference type="RefSeq" id="YP_208352.1">
    <property type="nucleotide sequence ID" value="NC_002946.2"/>
</dbReference>
<dbReference type="SMR" id="Q5F797"/>
<dbReference type="STRING" id="242231.NGO_1286"/>
<dbReference type="KEGG" id="ngo:NGO_1286"/>
<dbReference type="PATRIC" id="fig|242231.10.peg.1512"/>
<dbReference type="HOGENOM" id="CLU_006301_6_0_4"/>
<dbReference type="Proteomes" id="UP000000535">
    <property type="component" value="Chromosome"/>
</dbReference>
<dbReference type="GO" id="GO:0005829">
    <property type="term" value="C:cytosol"/>
    <property type="evidence" value="ECO:0007669"/>
    <property type="project" value="TreeGrafter"/>
</dbReference>
<dbReference type="GO" id="GO:0005525">
    <property type="term" value="F:GTP binding"/>
    <property type="evidence" value="ECO:0007669"/>
    <property type="project" value="UniProtKB-KW"/>
</dbReference>
<dbReference type="GO" id="GO:0003924">
    <property type="term" value="F:GTPase activity"/>
    <property type="evidence" value="ECO:0007669"/>
    <property type="project" value="UniProtKB-UniRule"/>
</dbReference>
<dbReference type="GO" id="GO:0003743">
    <property type="term" value="F:translation initiation factor activity"/>
    <property type="evidence" value="ECO:0007669"/>
    <property type="project" value="UniProtKB-UniRule"/>
</dbReference>
<dbReference type="CDD" id="cd01887">
    <property type="entry name" value="IF2_eIF5B"/>
    <property type="match status" value="1"/>
</dbReference>
<dbReference type="CDD" id="cd03702">
    <property type="entry name" value="IF2_mtIF2_II"/>
    <property type="match status" value="1"/>
</dbReference>
<dbReference type="CDD" id="cd03692">
    <property type="entry name" value="mtIF2_IVc"/>
    <property type="match status" value="1"/>
</dbReference>
<dbReference type="FunFam" id="2.40.30.10:FF:000007">
    <property type="entry name" value="Translation initiation factor IF-2"/>
    <property type="match status" value="1"/>
</dbReference>
<dbReference type="FunFam" id="2.40.30.10:FF:000008">
    <property type="entry name" value="Translation initiation factor IF-2"/>
    <property type="match status" value="1"/>
</dbReference>
<dbReference type="FunFam" id="3.40.50.10050:FF:000001">
    <property type="entry name" value="Translation initiation factor IF-2"/>
    <property type="match status" value="1"/>
</dbReference>
<dbReference type="FunFam" id="3.40.50.300:FF:000019">
    <property type="entry name" value="Translation initiation factor IF-2"/>
    <property type="match status" value="1"/>
</dbReference>
<dbReference type="Gene3D" id="3.40.50.300">
    <property type="entry name" value="P-loop containing nucleotide triphosphate hydrolases"/>
    <property type="match status" value="1"/>
</dbReference>
<dbReference type="Gene3D" id="3.30.56.50">
    <property type="entry name" value="Putative DNA-binding domain, N-terminal subdomain of bacterial translation initiation factor IF2"/>
    <property type="match status" value="1"/>
</dbReference>
<dbReference type="Gene3D" id="2.40.30.10">
    <property type="entry name" value="Translation factors"/>
    <property type="match status" value="2"/>
</dbReference>
<dbReference type="Gene3D" id="3.40.50.10050">
    <property type="entry name" value="Translation initiation factor IF- 2, domain 3"/>
    <property type="match status" value="1"/>
</dbReference>
<dbReference type="HAMAP" id="MF_00100_B">
    <property type="entry name" value="IF_2_B"/>
    <property type="match status" value="1"/>
</dbReference>
<dbReference type="InterPro" id="IPR009061">
    <property type="entry name" value="DNA-bd_dom_put_sf"/>
</dbReference>
<dbReference type="InterPro" id="IPR053905">
    <property type="entry name" value="EF-G-like_DII"/>
</dbReference>
<dbReference type="InterPro" id="IPR044145">
    <property type="entry name" value="IF2_II"/>
</dbReference>
<dbReference type="InterPro" id="IPR006847">
    <property type="entry name" value="IF2_N"/>
</dbReference>
<dbReference type="InterPro" id="IPR027417">
    <property type="entry name" value="P-loop_NTPase"/>
</dbReference>
<dbReference type="InterPro" id="IPR005225">
    <property type="entry name" value="Small_GTP-bd"/>
</dbReference>
<dbReference type="InterPro" id="IPR000795">
    <property type="entry name" value="T_Tr_GTP-bd_dom"/>
</dbReference>
<dbReference type="InterPro" id="IPR000178">
    <property type="entry name" value="TF_IF2_bacterial-like"/>
</dbReference>
<dbReference type="InterPro" id="IPR015760">
    <property type="entry name" value="TIF_IF2"/>
</dbReference>
<dbReference type="InterPro" id="IPR023115">
    <property type="entry name" value="TIF_IF2_dom3"/>
</dbReference>
<dbReference type="InterPro" id="IPR036925">
    <property type="entry name" value="TIF_IF2_dom3_sf"/>
</dbReference>
<dbReference type="InterPro" id="IPR009000">
    <property type="entry name" value="Transl_B-barrel_sf"/>
</dbReference>
<dbReference type="NCBIfam" id="TIGR00487">
    <property type="entry name" value="IF-2"/>
    <property type="match status" value="1"/>
</dbReference>
<dbReference type="NCBIfam" id="TIGR00231">
    <property type="entry name" value="small_GTP"/>
    <property type="match status" value="1"/>
</dbReference>
<dbReference type="PANTHER" id="PTHR43381:SF5">
    <property type="entry name" value="TR-TYPE G DOMAIN-CONTAINING PROTEIN"/>
    <property type="match status" value="1"/>
</dbReference>
<dbReference type="PANTHER" id="PTHR43381">
    <property type="entry name" value="TRANSLATION INITIATION FACTOR IF-2-RELATED"/>
    <property type="match status" value="1"/>
</dbReference>
<dbReference type="Pfam" id="PF22042">
    <property type="entry name" value="EF-G_D2"/>
    <property type="match status" value="1"/>
</dbReference>
<dbReference type="Pfam" id="PF00009">
    <property type="entry name" value="GTP_EFTU"/>
    <property type="match status" value="1"/>
</dbReference>
<dbReference type="Pfam" id="PF11987">
    <property type="entry name" value="IF-2"/>
    <property type="match status" value="1"/>
</dbReference>
<dbReference type="Pfam" id="PF04760">
    <property type="entry name" value="IF2_N"/>
    <property type="match status" value="2"/>
</dbReference>
<dbReference type="SUPFAM" id="SSF52156">
    <property type="entry name" value="Initiation factor IF2/eIF5b, domain 3"/>
    <property type="match status" value="1"/>
</dbReference>
<dbReference type="SUPFAM" id="SSF52540">
    <property type="entry name" value="P-loop containing nucleoside triphosphate hydrolases"/>
    <property type="match status" value="1"/>
</dbReference>
<dbReference type="SUPFAM" id="SSF46955">
    <property type="entry name" value="Putative DNA-binding domain"/>
    <property type="match status" value="1"/>
</dbReference>
<dbReference type="SUPFAM" id="SSF50447">
    <property type="entry name" value="Translation proteins"/>
    <property type="match status" value="2"/>
</dbReference>
<dbReference type="PROSITE" id="PS51722">
    <property type="entry name" value="G_TR_2"/>
    <property type="match status" value="1"/>
</dbReference>
<dbReference type="PROSITE" id="PS01176">
    <property type="entry name" value="IF2"/>
    <property type="match status" value="1"/>
</dbReference>
<comment type="function">
    <text evidence="2">One of the essential components for the initiation of protein synthesis. Protects formylmethionyl-tRNA from spontaneous hydrolysis and promotes its binding to the 30S ribosomal subunits. Also involved in the hydrolysis of GTP during the formation of the 70S ribosomal complex.</text>
</comment>
<comment type="subcellular location">
    <subcellularLocation>
        <location evidence="2">Cytoplasm</location>
    </subcellularLocation>
</comment>
<comment type="similarity">
    <text evidence="2">Belongs to the TRAFAC class translation factor GTPase superfamily. Classic translation factor GTPase family. IF-2 subfamily.</text>
</comment>
<protein>
    <recommendedName>
        <fullName evidence="2">Translation initiation factor IF-2</fullName>
    </recommendedName>
</protein>
<gene>
    <name evidence="2" type="primary">infB</name>
    <name type="ordered locus">NGO_1286</name>
</gene>
<feature type="chain" id="PRO_0000228216" description="Translation initiation factor IF-2">
    <location>
        <begin position="1"/>
        <end position="943"/>
    </location>
</feature>
<feature type="domain" description="tr-type G">
    <location>
        <begin position="443"/>
        <end position="612"/>
    </location>
</feature>
<feature type="region of interest" description="Disordered" evidence="3">
    <location>
        <begin position="99"/>
        <end position="354"/>
    </location>
</feature>
<feature type="region of interest" description="G1" evidence="1">
    <location>
        <begin position="452"/>
        <end position="459"/>
    </location>
</feature>
<feature type="region of interest" description="G2" evidence="1">
    <location>
        <begin position="477"/>
        <end position="481"/>
    </location>
</feature>
<feature type="region of interest" description="G3" evidence="1">
    <location>
        <begin position="498"/>
        <end position="501"/>
    </location>
</feature>
<feature type="region of interest" description="G4" evidence="1">
    <location>
        <begin position="552"/>
        <end position="555"/>
    </location>
</feature>
<feature type="region of interest" description="G5" evidence="1">
    <location>
        <begin position="588"/>
        <end position="590"/>
    </location>
</feature>
<feature type="compositionally biased region" description="Low complexity" evidence="3">
    <location>
        <begin position="99"/>
        <end position="113"/>
    </location>
</feature>
<feature type="compositionally biased region" description="Basic and acidic residues" evidence="3">
    <location>
        <begin position="117"/>
        <end position="141"/>
    </location>
</feature>
<feature type="compositionally biased region" description="Low complexity" evidence="3">
    <location>
        <begin position="145"/>
        <end position="172"/>
    </location>
</feature>
<feature type="compositionally biased region" description="Basic and acidic residues" evidence="3">
    <location>
        <begin position="173"/>
        <end position="197"/>
    </location>
</feature>
<feature type="compositionally biased region" description="Low complexity" evidence="3">
    <location>
        <begin position="200"/>
        <end position="215"/>
    </location>
</feature>
<feature type="compositionally biased region" description="Basic and acidic residues" evidence="3">
    <location>
        <begin position="216"/>
        <end position="250"/>
    </location>
</feature>
<feature type="compositionally biased region" description="Low complexity" evidence="3">
    <location>
        <begin position="251"/>
        <end position="264"/>
    </location>
</feature>
<feature type="compositionally biased region" description="Basic and acidic residues" evidence="3">
    <location>
        <begin position="295"/>
        <end position="308"/>
    </location>
</feature>
<feature type="compositionally biased region" description="Basic and acidic residues" evidence="3">
    <location>
        <begin position="319"/>
        <end position="335"/>
    </location>
</feature>
<feature type="binding site" evidence="2">
    <location>
        <begin position="452"/>
        <end position="459"/>
    </location>
    <ligand>
        <name>GTP</name>
        <dbReference type="ChEBI" id="CHEBI:37565"/>
    </ligand>
</feature>
<feature type="binding site" evidence="2">
    <location>
        <begin position="498"/>
        <end position="502"/>
    </location>
    <ligand>
        <name>GTP</name>
        <dbReference type="ChEBI" id="CHEBI:37565"/>
    </ligand>
</feature>
<feature type="binding site" evidence="2">
    <location>
        <begin position="552"/>
        <end position="555"/>
    </location>
    <ligand>
        <name>GTP</name>
        <dbReference type="ChEBI" id="CHEBI:37565"/>
    </ligand>
</feature>
<organism>
    <name type="scientific">Neisseria gonorrhoeae (strain ATCC 700825 / FA 1090)</name>
    <dbReference type="NCBI Taxonomy" id="242231"/>
    <lineage>
        <taxon>Bacteria</taxon>
        <taxon>Pseudomonadati</taxon>
        <taxon>Pseudomonadota</taxon>
        <taxon>Betaproteobacteria</taxon>
        <taxon>Neisseriales</taxon>
        <taxon>Neisseriaceae</taxon>
        <taxon>Neisseria</taxon>
    </lineage>
</organism>
<name>IF2_NEIG1</name>
<accession>Q5F797</accession>
<proteinExistence type="inferred from homology"/>
<evidence type="ECO:0000250" key="1"/>
<evidence type="ECO:0000255" key="2">
    <source>
        <dbReference type="HAMAP-Rule" id="MF_00100"/>
    </source>
</evidence>
<evidence type="ECO:0000256" key="3">
    <source>
        <dbReference type="SAM" id="MobiDB-lite"/>
    </source>
</evidence>